<evidence type="ECO:0000255" key="1">
    <source>
        <dbReference type="HAMAP-Rule" id="MF_00208"/>
    </source>
</evidence>
<proteinExistence type="inferred from homology"/>
<comment type="function">
    <text evidence="1">Catalyzes the addition of an amino acid to the nucleotide precursor UDP-N-acetylmuramoyl-L-alanyl-D-glutamate (UMAG) in the biosynthesis of bacterial cell-wall peptidoglycan.</text>
</comment>
<comment type="pathway">
    <text evidence="1">Cell wall biogenesis; peptidoglycan biosynthesis.</text>
</comment>
<comment type="subcellular location">
    <subcellularLocation>
        <location evidence="1">Cytoplasm</location>
    </subcellularLocation>
</comment>
<comment type="PTM">
    <text evidence="1">Carboxylation is probably crucial for Mg(2+) binding and, consequently, for the gamma-phosphate positioning of ATP.</text>
</comment>
<comment type="similarity">
    <text evidence="1">Belongs to the MurCDEF family. MurE subfamily.</text>
</comment>
<name>MURE_LACDA</name>
<reference key="1">
    <citation type="journal article" date="2006" name="Proc. Natl. Acad. Sci. U.S.A.">
        <title>The complete genome sequence of Lactobacillus bulgaricus reveals extensive and ongoing reductive evolution.</title>
        <authorList>
            <person name="van de Guchte M."/>
            <person name="Penaud S."/>
            <person name="Grimaldi C."/>
            <person name="Barbe V."/>
            <person name="Bryson K."/>
            <person name="Nicolas P."/>
            <person name="Robert C."/>
            <person name="Oztas S."/>
            <person name="Mangenot S."/>
            <person name="Couloux A."/>
            <person name="Loux V."/>
            <person name="Dervyn R."/>
            <person name="Bossy R."/>
            <person name="Bolotin A."/>
            <person name="Batto J.-M."/>
            <person name="Walunas T."/>
            <person name="Gibrat J.-F."/>
            <person name="Bessieres P."/>
            <person name="Weissenbach J."/>
            <person name="Ehrlich S.D."/>
            <person name="Maguin E."/>
        </authorList>
    </citation>
    <scope>NUCLEOTIDE SEQUENCE [LARGE SCALE GENOMIC DNA]</scope>
    <source>
        <strain>ATCC 11842 / DSM 20081 / BCRC 10696 / JCM 1002 / NBRC 13953 / NCIMB 11778 / NCTC 12712 / WDCM 00102 / Lb 14</strain>
    </source>
</reference>
<protein>
    <recommendedName>
        <fullName evidence="1">UDP-N-acetylmuramyl-tripeptide synthetase</fullName>
        <ecNumber evidence="1">6.3.2.-</ecNumber>
    </recommendedName>
    <alternativeName>
        <fullName evidence="1">UDP-MurNAc-tripeptide synthetase</fullName>
    </alternativeName>
</protein>
<accession>Q1G8B5</accession>
<keyword id="KW-0067">ATP-binding</keyword>
<keyword id="KW-0131">Cell cycle</keyword>
<keyword id="KW-0132">Cell division</keyword>
<keyword id="KW-0133">Cell shape</keyword>
<keyword id="KW-0961">Cell wall biogenesis/degradation</keyword>
<keyword id="KW-0963">Cytoplasm</keyword>
<keyword id="KW-0436">Ligase</keyword>
<keyword id="KW-0547">Nucleotide-binding</keyword>
<keyword id="KW-0573">Peptidoglycan synthesis</keyword>
<keyword id="KW-1185">Reference proteome</keyword>
<sequence>MNISLNTCILILKEHHLLKSSAVQDTVQTIMEAVSYDSRDVQNNSLFFCKGAGFRPTYLTMAKENGAIAYVAEQPYPEGTGMHALIVRNVSKAMALLSAAFYSFPQDDLFLVGFTGTKGKTTSAYFLKGMLDQLNGGRTALLSSVDNILGPAPEDTFKSSLTTPESLDLFRDMRRAVDNGMTHMVMEVSSQAYKKSRVFGLTYDLGFFLNISPDHIGVNEHPNFEDYLHCKLQLLVNSRKCIINAETDRFADVYAAATTTTNPDSIYLFARDGFENPDLKKPIDFRYKSVETDLAETKFTLTTASSKAHKLPISGEYTLQMIGDFNETNATGAIIGAGLAGMSYEDCAKGIRHVTIPGRMETVTTQKHGLIVVDYAHNKASMLALMRFMRREFTTPRVIVVVGAPGDKGISRRPGFSESLTAEADKAYLTTDDPGFENAQDICEEIDAGIDHSKCETVIELDREKAIKEAISEAGPDDVVLLCGKGADAFQKIRGVDTPYAGDIVIARQVIQELEK</sequence>
<feature type="chain" id="PRO_1000012363" description="UDP-N-acetylmuramyl-tripeptide synthetase">
    <location>
        <begin position="1"/>
        <end position="516"/>
    </location>
</feature>
<feature type="binding site" evidence="1">
    <location>
        <position position="38"/>
    </location>
    <ligand>
        <name>UDP-N-acetyl-alpha-D-muramoyl-L-alanyl-D-glutamate</name>
        <dbReference type="ChEBI" id="CHEBI:83900"/>
    </ligand>
</feature>
<feature type="binding site" evidence="1">
    <location>
        <begin position="116"/>
        <end position="122"/>
    </location>
    <ligand>
        <name>ATP</name>
        <dbReference type="ChEBI" id="CHEBI:30616"/>
    </ligand>
</feature>
<feature type="binding site" evidence="1">
    <location>
        <begin position="162"/>
        <end position="163"/>
    </location>
    <ligand>
        <name>UDP-N-acetyl-alpha-D-muramoyl-L-alanyl-D-glutamate</name>
        <dbReference type="ChEBI" id="CHEBI:83900"/>
    </ligand>
</feature>
<feature type="binding site" evidence="1">
    <location>
        <position position="189"/>
    </location>
    <ligand>
        <name>UDP-N-acetyl-alpha-D-muramoyl-L-alanyl-D-glutamate</name>
        <dbReference type="ChEBI" id="CHEBI:83900"/>
    </ligand>
</feature>
<feature type="binding site" evidence="1">
    <location>
        <position position="197"/>
    </location>
    <ligand>
        <name>UDP-N-acetyl-alpha-D-muramoyl-L-alanyl-D-glutamate</name>
        <dbReference type="ChEBI" id="CHEBI:83900"/>
    </ligand>
</feature>
<feature type="modified residue" description="N6-carboxylysine" evidence="1">
    <location>
        <position position="231"/>
    </location>
</feature>
<dbReference type="EC" id="6.3.2.-" evidence="1"/>
<dbReference type="EMBL" id="CR954253">
    <property type="protein sequence ID" value="CAI98782.1"/>
    <property type="molecule type" value="Genomic_DNA"/>
</dbReference>
<dbReference type="RefSeq" id="WP_003621127.1">
    <property type="nucleotide sequence ID" value="NZ_JQAV01000004.1"/>
</dbReference>
<dbReference type="SMR" id="Q1G8B5"/>
<dbReference type="STRING" id="390333.Ldb2044"/>
<dbReference type="KEGG" id="ldb:Ldb2044"/>
<dbReference type="PATRIC" id="fig|390333.13.peg.1473"/>
<dbReference type="eggNOG" id="COG0769">
    <property type="taxonomic scope" value="Bacteria"/>
</dbReference>
<dbReference type="HOGENOM" id="CLU_022291_4_2_9"/>
<dbReference type="BioCyc" id="LDEL390333:LDB_RS08905-MONOMER"/>
<dbReference type="UniPathway" id="UPA00219"/>
<dbReference type="Proteomes" id="UP000001259">
    <property type="component" value="Chromosome"/>
</dbReference>
<dbReference type="GO" id="GO:0005737">
    <property type="term" value="C:cytoplasm"/>
    <property type="evidence" value="ECO:0007669"/>
    <property type="project" value="UniProtKB-SubCell"/>
</dbReference>
<dbReference type="GO" id="GO:0016881">
    <property type="term" value="F:acid-amino acid ligase activity"/>
    <property type="evidence" value="ECO:0007669"/>
    <property type="project" value="UniProtKB-UniRule"/>
</dbReference>
<dbReference type="GO" id="GO:0005524">
    <property type="term" value="F:ATP binding"/>
    <property type="evidence" value="ECO:0007669"/>
    <property type="project" value="UniProtKB-UniRule"/>
</dbReference>
<dbReference type="GO" id="GO:0000287">
    <property type="term" value="F:magnesium ion binding"/>
    <property type="evidence" value="ECO:0007669"/>
    <property type="project" value="UniProtKB-UniRule"/>
</dbReference>
<dbReference type="GO" id="GO:0051301">
    <property type="term" value="P:cell division"/>
    <property type="evidence" value="ECO:0007669"/>
    <property type="project" value="UniProtKB-KW"/>
</dbReference>
<dbReference type="GO" id="GO:0071555">
    <property type="term" value="P:cell wall organization"/>
    <property type="evidence" value="ECO:0007669"/>
    <property type="project" value="UniProtKB-KW"/>
</dbReference>
<dbReference type="GO" id="GO:0009252">
    <property type="term" value="P:peptidoglycan biosynthetic process"/>
    <property type="evidence" value="ECO:0007669"/>
    <property type="project" value="UniProtKB-UniRule"/>
</dbReference>
<dbReference type="GO" id="GO:0008360">
    <property type="term" value="P:regulation of cell shape"/>
    <property type="evidence" value="ECO:0007669"/>
    <property type="project" value="UniProtKB-KW"/>
</dbReference>
<dbReference type="Gene3D" id="3.90.190.20">
    <property type="entry name" value="Mur ligase, C-terminal domain"/>
    <property type="match status" value="1"/>
</dbReference>
<dbReference type="Gene3D" id="3.40.1190.10">
    <property type="entry name" value="Mur-like, catalytic domain"/>
    <property type="match status" value="1"/>
</dbReference>
<dbReference type="Gene3D" id="3.40.1390.10">
    <property type="entry name" value="MurE/MurF, N-terminal domain"/>
    <property type="match status" value="1"/>
</dbReference>
<dbReference type="HAMAP" id="MF_00208">
    <property type="entry name" value="MurE"/>
    <property type="match status" value="1"/>
</dbReference>
<dbReference type="InterPro" id="IPR036565">
    <property type="entry name" value="Mur-like_cat_sf"/>
</dbReference>
<dbReference type="InterPro" id="IPR004101">
    <property type="entry name" value="Mur_ligase_C"/>
</dbReference>
<dbReference type="InterPro" id="IPR036615">
    <property type="entry name" value="Mur_ligase_C_dom_sf"/>
</dbReference>
<dbReference type="InterPro" id="IPR013221">
    <property type="entry name" value="Mur_ligase_cen"/>
</dbReference>
<dbReference type="InterPro" id="IPR035911">
    <property type="entry name" value="MurE/MurF_N"/>
</dbReference>
<dbReference type="InterPro" id="IPR005761">
    <property type="entry name" value="UDP-N-AcMur-Glu-dNH2Pim_ligase"/>
</dbReference>
<dbReference type="NCBIfam" id="TIGR01085">
    <property type="entry name" value="murE"/>
    <property type="match status" value="1"/>
</dbReference>
<dbReference type="NCBIfam" id="NF001127">
    <property type="entry name" value="PRK00139.2-1"/>
    <property type="match status" value="1"/>
</dbReference>
<dbReference type="NCBIfam" id="NF001130">
    <property type="entry name" value="PRK00139.2-4"/>
    <property type="match status" value="1"/>
</dbReference>
<dbReference type="PANTHER" id="PTHR23135">
    <property type="entry name" value="MUR LIGASE FAMILY MEMBER"/>
    <property type="match status" value="1"/>
</dbReference>
<dbReference type="PANTHER" id="PTHR23135:SF4">
    <property type="entry name" value="UDP-N-ACETYLMURAMOYL-L-ALANYL-D-GLUTAMATE--2,6-DIAMINOPIMELATE LIGASE MURE HOMOLOG, CHLOROPLASTIC"/>
    <property type="match status" value="1"/>
</dbReference>
<dbReference type="Pfam" id="PF02875">
    <property type="entry name" value="Mur_ligase_C"/>
    <property type="match status" value="1"/>
</dbReference>
<dbReference type="Pfam" id="PF08245">
    <property type="entry name" value="Mur_ligase_M"/>
    <property type="match status" value="1"/>
</dbReference>
<dbReference type="SUPFAM" id="SSF53623">
    <property type="entry name" value="MurD-like peptide ligases, catalytic domain"/>
    <property type="match status" value="1"/>
</dbReference>
<dbReference type="SUPFAM" id="SSF53244">
    <property type="entry name" value="MurD-like peptide ligases, peptide-binding domain"/>
    <property type="match status" value="1"/>
</dbReference>
<dbReference type="SUPFAM" id="SSF63418">
    <property type="entry name" value="MurE/MurF N-terminal domain"/>
    <property type="match status" value="1"/>
</dbReference>
<gene>
    <name evidence="1" type="primary">murE</name>
    <name type="ordered locus">Ldb2044</name>
</gene>
<organism>
    <name type="scientific">Lactobacillus delbrueckii subsp. bulgaricus (strain ATCC 11842 / DSM 20081 / BCRC 10696 / JCM 1002 / NBRC 13953 / NCIMB 11778 / NCTC 12712 / WDCM 00102 / Lb 14)</name>
    <dbReference type="NCBI Taxonomy" id="390333"/>
    <lineage>
        <taxon>Bacteria</taxon>
        <taxon>Bacillati</taxon>
        <taxon>Bacillota</taxon>
        <taxon>Bacilli</taxon>
        <taxon>Lactobacillales</taxon>
        <taxon>Lactobacillaceae</taxon>
        <taxon>Lactobacillus</taxon>
    </lineage>
</organism>